<dbReference type="EC" id="6.1.1.1" evidence="1"/>
<dbReference type="EMBL" id="CP000087">
    <property type="protein sequence ID" value="ABE04992.1"/>
    <property type="molecule type" value="Genomic_DNA"/>
</dbReference>
<dbReference type="RefSeq" id="WP_011477574.1">
    <property type="nucleotide sequence ID" value="NC_007940.1"/>
</dbReference>
<dbReference type="SMR" id="Q1RI22"/>
<dbReference type="KEGG" id="rbe:RBE_0911"/>
<dbReference type="eggNOG" id="COG0162">
    <property type="taxonomic scope" value="Bacteria"/>
</dbReference>
<dbReference type="HOGENOM" id="CLU_024003_0_3_5"/>
<dbReference type="OrthoDB" id="9804243at2"/>
<dbReference type="Proteomes" id="UP000001951">
    <property type="component" value="Chromosome"/>
</dbReference>
<dbReference type="GO" id="GO:0005829">
    <property type="term" value="C:cytosol"/>
    <property type="evidence" value="ECO:0007669"/>
    <property type="project" value="TreeGrafter"/>
</dbReference>
<dbReference type="GO" id="GO:0005524">
    <property type="term" value="F:ATP binding"/>
    <property type="evidence" value="ECO:0007669"/>
    <property type="project" value="UniProtKB-UniRule"/>
</dbReference>
<dbReference type="GO" id="GO:0003723">
    <property type="term" value="F:RNA binding"/>
    <property type="evidence" value="ECO:0007669"/>
    <property type="project" value="UniProtKB-KW"/>
</dbReference>
<dbReference type="GO" id="GO:0004831">
    <property type="term" value="F:tyrosine-tRNA ligase activity"/>
    <property type="evidence" value="ECO:0007669"/>
    <property type="project" value="UniProtKB-UniRule"/>
</dbReference>
<dbReference type="GO" id="GO:0006437">
    <property type="term" value="P:tyrosyl-tRNA aminoacylation"/>
    <property type="evidence" value="ECO:0007669"/>
    <property type="project" value="UniProtKB-UniRule"/>
</dbReference>
<dbReference type="CDD" id="cd00165">
    <property type="entry name" value="S4"/>
    <property type="match status" value="1"/>
</dbReference>
<dbReference type="CDD" id="cd00805">
    <property type="entry name" value="TyrRS_core"/>
    <property type="match status" value="1"/>
</dbReference>
<dbReference type="FunFam" id="1.10.240.10:FF:000001">
    <property type="entry name" value="Tyrosine--tRNA ligase"/>
    <property type="match status" value="1"/>
</dbReference>
<dbReference type="FunFam" id="3.40.50.620:FF:000008">
    <property type="entry name" value="Tyrosine--tRNA ligase"/>
    <property type="match status" value="1"/>
</dbReference>
<dbReference type="Gene3D" id="3.40.50.620">
    <property type="entry name" value="HUPs"/>
    <property type="match status" value="1"/>
</dbReference>
<dbReference type="Gene3D" id="3.10.290.10">
    <property type="entry name" value="RNA-binding S4 domain"/>
    <property type="match status" value="1"/>
</dbReference>
<dbReference type="Gene3D" id="1.10.240.10">
    <property type="entry name" value="Tyrosyl-Transfer RNA Synthetase"/>
    <property type="match status" value="1"/>
</dbReference>
<dbReference type="HAMAP" id="MF_02006">
    <property type="entry name" value="Tyr_tRNA_synth_type1"/>
    <property type="match status" value="1"/>
</dbReference>
<dbReference type="InterPro" id="IPR002305">
    <property type="entry name" value="aa-tRNA-synth_Ic"/>
</dbReference>
<dbReference type="InterPro" id="IPR014729">
    <property type="entry name" value="Rossmann-like_a/b/a_fold"/>
</dbReference>
<dbReference type="InterPro" id="IPR036986">
    <property type="entry name" value="S4_RNA-bd_sf"/>
</dbReference>
<dbReference type="InterPro" id="IPR002307">
    <property type="entry name" value="Tyr-tRNA-ligase"/>
</dbReference>
<dbReference type="InterPro" id="IPR024088">
    <property type="entry name" value="Tyr-tRNA-ligase_bac-type"/>
</dbReference>
<dbReference type="InterPro" id="IPR024107">
    <property type="entry name" value="Tyr-tRNA-ligase_bac_1"/>
</dbReference>
<dbReference type="NCBIfam" id="TIGR00234">
    <property type="entry name" value="tyrS"/>
    <property type="match status" value="1"/>
</dbReference>
<dbReference type="PANTHER" id="PTHR11766:SF0">
    <property type="entry name" value="TYROSINE--TRNA LIGASE, MITOCHONDRIAL"/>
    <property type="match status" value="1"/>
</dbReference>
<dbReference type="PANTHER" id="PTHR11766">
    <property type="entry name" value="TYROSYL-TRNA SYNTHETASE"/>
    <property type="match status" value="1"/>
</dbReference>
<dbReference type="Pfam" id="PF00579">
    <property type="entry name" value="tRNA-synt_1b"/>
    <property type="match status" value="1"/>
</dbReference>
<dbReference type="PRINTS" id="PR01040">
    <property type="entry name" value="TRNASYNTHTYR"/>
</dbReference>
<dbReference type="SUPFAM" id="SSF55174">
    <property type="entry name" value="Alpha-L RNA-binding motif"/>
    <property type="match status" value="1"/>
</dbReference>
<dbReference type="SUPFAM" id="SSF52374">
    <property type="entry name" value="Nucleotidylyl transferase"/>
    <property type="match status" value="1"/>
</dbReference>
<dbReference type="PROSITE" id="PS50889">
    <property type="entry name" value="S4"/>
    <property type="match status" value="1"/>
</dbReference>
<gene>
    <name evidence="1" type="primary">tyrS</name>
    <name type="ordered locus">RBE_0911</name>
</gene>
<evidence type="ECO:0000255" key="1">
    <source>
        <dbReference type="HAMAP-Rule" id="MF_02006"/>
    </source>
</evidence>
<proteinExistence type="inferred from homology"/>
<accession>Q1RI22</accession>
<protein>
    <recommendedName>
        <fullName evidence="1">Tyrosine--tRNA ligase</fullName>
        <ecNumber evidence="1">6.1.1.1</ecNumber>
    </recommendedName>
    <alternativeName>
        <fullName evidence="1">Tyrosyl-tRNA synthetase</fullName>
        <shortName evidence="1">TyrRS</shortName>
    </alternativeName>
</protein>
<comment type="function">
    <text evidence="1">Catalyzes the attachment of tyrosine to tRNA(Tyr) in a two-step reaction: tyrosine is first activated by ATP to form Tyr-AMP and then transferred to the acceptor end of tRNA(Tyr).</text>
</comment>
<comment type="catalytic activity">
    <reaction evidence="1">
        <text>tRNA(Tyr) + L-tyrosine + ATP = L-tyrosyl-tRNA(Tyr) + AMP + diphosphate + H(+)</text>
        <dbReference type="Rhea" id="RHEA:10220"/>
        <dbReference type="Rhea" id="RHEA-COMP:9706"/>
        <dbReference type="Rhea" id="RHEA-COMP:9707"/>
        <dbReference type="ChEBI" id="CHEBI:15378"/>
        <dbReference type="ChEBI" id="CHEBI:30616"/>
        <dbReference type="ChEBI" id="CHEBI:33019"/>
        <dbReference type="ChEBI" id="CHEBI:58315"/>
        <dbReference type="ChEBI" id="CHEBI:78442"/>
        <dbReference type="ChEBI" id="CHEBI:78536"/>
        <dbReference type="ChEBI" id="CHEBI:456215"/>
        <dbReference type="EC" id="6.1.1.1"/>
    </reaction>
</comment>
<comment type="subunit">
    <text evidence="1">Homodimer.</text>
</comment>
<comment type="subcellular location">
    <subcellularLocation>
        <location evidence="1">Cytoplasm</location>
    </subcellularLocation>
</comment>
<comment type="similarity">
    <text evidence="1">Belongs to the class-I aminoacyl-tRNA synthetase family. TyrS type 1 subfamily.</text>
</comment>
<feature type="chain" id="PRO_0000272362" description="Tyrosine--tRNA ligase">
    <location>
        <begin position="1"/>
        <end position="411"/>
    </location>
</feature>
<feature type="domain" description="S4 RNA-binding" evidence="1">
    <location>
        <begin position="345"/>
        <end position="411"/>
    </location>
</feature>
<feature type="short sequence motif" description="'HIGH' region">
    <location>
        <begin position="39"/>
        <end position="48"/>
    </location>
</feature>
<feature type="short sequence motif" description="'KMSKS' region">
    <location>
        <begin position="231"/>
        <end position="235"/>
    </location>
</feature>
<feature type="binding site" evidence="1">
    <location>
        <position position="34"/>
    </location>
    <ligand>
        <name>L-tyrosine</name>
        <dbReference type="ChEBI" id="CHEBI:58315"/>
    </ligand>
</feature>
<feature type="binding site" evidence="1">
    <location>
        <position position="171"/>
    </location>
    <ligand>
        <name>L-tyrosine</name>
        <dbReference type="ChEBI" id="CHEBI:58315"/>
    </ligand>
</feature>
<feature type="binding site" evidence="1">
    <location>
        <position position="175"/>
    </location>
    <ligand>
        <name>L-tyrosine</name>
        <dbReference type="ChEBI" id="CHEBI:58315"/>
    </ligand>
</feature>
<feature type="binding site" evidence="1">
    <location>
        <position position="234"/>
    </location>
    <ligand>
        <name>ATP</name>
        <dbReference type="ChEBI" id="CHEBI:30616"/>
    </ligand>
</feature>
<reference key="1">
    <citation type="journal article" date="2006" name="PLoS Genet.">
        <title>Genome sequence of Rickettsia bellii illuminates the role of amoebae in gene exchanges between intracellular pathogens.</title>
        <authorList>
            <person name="Ogata H."/>
            <person name="La Scola B."/>
            <person name="Audic S."/>
            <person name="Renesto P."/>
            <person name="Blanc G."/>
            <person name="Robert C."/>
            <person name="Fournier P.-E."/>
            <person name="Claverie J.-M."/>
            <person name="Raoult D."/>
        </authorList>
    </citation>
    <scope>NUCLEOTIDE SEQUENCE [LARGE SCALE GENOMIC DNA]</scope>
    <source>
        <strain>RML369-C</strain>
    </source>
</reference>
<name>SYY_RICBR</name>
<keyword id="KW-0030">Aminoacyl-tRNA synthetase</keyword>
<keyword id="KW-0067">ATP-binding</keyword>
<keyword id="KW-0963">Cytoplasm</keyword>
<keyword id="KW-0436">Ligase</keyword>
<keyword id="KW-0547">Nucleotide-binding</keyword>
<keyword id="KW-0648">Protein biosynthesis</keyword>
<keyword id="KW-0694">RNA-binding</keyword>
<organism>
    <name type="scientific">Rickettsia bellii (strain RML369-C)</name>
    <dbReference type="NCBI Taxonomy" id="336407"/>
    <lineage>
        <taxon>Bacteria</taxon>
        <taxon>Pseudomonadati</taxon>
        <taxon>Pseudomonadota</taxon>
        <taxon>Alphaproteobacteria</taxon>
        <taxon>Rickettsiales</taxon>
        <taxon>Rickettsiaceae</taxon>
        <taxon>Rickettsieae</taxon>
        <taxon>Rickettsia</taxon>
        <taxon>belli group</taxon>
    </lineage>
</organism>
<sequence length="411" mass="46387">MTFIEEFINKGYFHQCTDLERLTSITKESKIAAYIGFDCTATSLHIGSLMQIMILRLLQKHGHKPIVIIGGGTSKIGDPSGKDEARKTITKEDIARNAEGIKKSLSKFIKFGDGESDAIMLDNAEWLDSLYYLDFLRDFGSHFSVNRMLTMDSVKLRLEREQHLSFLEFNYMLLQAYDFYYLSKHYNCSLQLGGSDQWGNIVMGADLTRKISSKEVFGMTTPLLTTASGAKMGKTAAGAVWLNEDLLSPYDYYQYWRNCEDADIVRFAKLYSELTNEELVVFENLAAEDINAAKKQLAYELTKLCHGKQEAKNALETSVKIFEQGQIDENLTTIVLEPEMLQAGITAFELFHEAGLATSKSEARKLIRGKGAKVNDQLIEDENMVINTTFLLDNKVIKLSAGKKRHILVKI</sequence>